<accession>Q93ZN9</accession>
<accession>O81885</accession>
<keyword id="KW-0002">3D-structure</keyword>
<keyword id="KW-0032">Aminotransferase</keyword>
<keyword id="KW-0150">Chloroplast</keyword>
<keyword id="KW-0934">Plastid</keyword>
<keyword id="KW-0663">Pyridoxal phosphate</keyword>
<keyword id="KW-1185">Reference proteome</keyword>
<keyword id="KW-0808">Transferase</keyword>
<keyword id="KW-0809">Transit peptide</keyword>
<protein>
    <recommendedName>
        <fullName>LL-diaminopimelate aminotransferase, chloroplastic</fullName>
        <shortName>AtDAP-AT</shortName>
        <shortName>DAP-AT</shortName>
        <shortName>DAP-aminotransferase</shortName>
        <shortName>LL-DAP-aminotransferase</shortName>
        <ecNumber evidence="2 3">2.6.1.83</ecNumber>
    </recommendedName>
    <alternativeName>
        <fullName>Protein ABERRANT GROWTH AND DEATH 2</fullName>
    </alternativeName>
</protein>
<organism>
    <name type="scientific">Arabidopsis thaliana</name>
    <name type="common">Mouse-ear cress</name>
    <dbReference type="NCBI Taxonomy" id="3702"/>
    <lineage>
        <taxon>Eukaryota</taxon>
        <taxon>Viridiplantae</taxon>
        <taxon>Streptophyta</taxon>
        <taxon>Embryophyta</taxon>
        <taxon>Tracheophyta</taxon>
        <taxon>Spermatophyta</taxon>
        <taxon>Magnoliopsida</taxon>
        <taxon>eudicotyledons</taxon>
        <taxon>Gunneridae</taxon>
        <taxon>Pentapetalae</taxon>
        <taxon>rosids</taxon>
        <taxon>malvids</taxon>
        <taxon>Brassicales</taxon>
        <taxon>Brassicaceae</taxon>
        <taxon>Camelineae</taxon>
        <taxon>Arabidopsis</taxon>
    </lineage>
</organism>
<dbReference type="EC" id="2.6.1.83" evidence="2 3"/>
<dbReference type="EMBL" id="AY518701">
    <property type="protein sequence ID" value="AAR99909.1"/>
    <property type="molecule type" value="mRNA"/>
</dbReference>
<dbReference type="EMBL" id="AL031394">
    <property type="protein sequence ID" value="CAA20581.1"/>
    <property type="status" value="ALT_SEQ"/>
    <property type="molecule type" value="Genomic_DNA"/>
</dbReference>
<dbReference type="EMBL" id="AL161584">
    <property type="protein sequence ID" value="CAB80085.1"/>
    <property type="status" value="ALT_SEQ"/>
    <property type="molecule type" value="Genomic_DNA"/>
</dbReference>
<dbReference type="EMBL" id="CP002687">
    <property type="protein sequence ID" value="AEE86265.1"/>
    <property type="molecule type" value="Genomic_DNA"/>
</dbReference>
<dbReference type="EMBL" id="AY056423">
    <property type="protein sequence ID" value="AAL08279.1"/>
    <property type="molecule type" value="mRNA"/>
</dbReference>
<dbReference type="EMBL" id="AY065256">
    <property type="protein sequence ID" value="AAL38732.1"/>
    <property type="molecule type" value="mRNA"/>
</dbReference>
<dbReference type="EMBL" id="AY117246">
    <property type="protein sequence ID" value="AAM51321.1"/>
    <property type="molecule type" value="mRNA"/>
</dbReference>
<dbReference type="PIR" id="T04985">
    <property type="entry name" value="T04985"/>
</dbReference>
<dbReference type="RefSeq" id="NP_567934.1">
    <property type="nucleotide sequence ID" value="NM_119526.4"/>
</dbReference>
<dbReference type="PDB" id="2Z1Z">
    <property type="method" value="X-ray"/>
    <property type="resolution" value="2.40 A"/>
    <property type="chains" value="A/B=36-461"/>
</dbReference>
<dbReference type="PDB" id="2Z20">
    <property type="method" value="X-ray"/>
    <property type="resolution" value="1.95 A"/>
    <property type="chains" value="A/B=36-461"/>
</dbReference>
<dbReference type="PDB" id="3EI5">
    <property type="method" value="X-ray"/>
    <property type="resolution" value="2.05 A"/>
    <property type="chains" value="A/B=36-461"/>
</dbReference>
<dbReference type="PDB" id="3EI6">
    <property type="method" value="X-ray"/>
    <property type="resolution" value="1.90 A"/>
    <property type="chains" value="A/B=36-461"/>
</dbReference>
<dbReference type="PDB" id="3EI7">
    <property type="method" value="X-ray"/>
    <property type="resolution" value="1.99 A"/>
    <property type="chains" value="A/B=36-461"/>
</dbReference>
<dbReference type="PDB" id="3EI8">
    <property type="method" value="X-ray"/>
    <property type="resolution" value="1.60 A"/>
    <property type="chains" value="A/B=36-461"/>
</dbReference>
<dbReference type="PDB" id="3EI9">
    <property type="method" value="X-ray"/>
    <property type="resolution" value="1.55 A"/>
    <property type="chains" value="A/B=36-461"/>
</dbReference>
<dbReference type="PDB" id="3EIA">
    <property type="method" value="X-ray"/>
    <property type="resolution" value="1.85 A"/>
    <property type="chains" value="A/B=36-461"/>
</dbReference>
<dbReference type="PDB" id="3EIB">
    <property type="method" value="X-ray"/>
    <property type="resolution" value="1.85 A"/>
    <property type="chains" value="A/B=36-461"/>
</dbReference>
<dbReference type="PDBsum" id="2Z1Z"/>
<dbReference type="PDBsum" id="2Z20"/>
<dbReference type="PDBsum" id="3EI5"/>
<dbReference type="PDBsum" id="3EI6"/>
<dbReference type="PDBsum" id="3EI7"/>
<dbReference type="PDBsum" id="3EI8"/>
<dbReference type="PDBsum" id="3EI9"/>
<dbReference type="PDBsum" id="3EIA"/>
<dbReference type="PDBsum" id="3EIB"/>
<dbReference type="SMR" id="Q93ZN9"/>
<dbReference type="BioGRID" id="14792">
    <property type="interactions" value="16"/>
</dbReference>
<dbReference type="FunCoup" id="Q93ZN9">
    <property type="interactions" value="899"/>
</dbReference>
<dbReference type="STRING" id="3702.Q93ZN9"/>
<dbReference type="BindingDB" id="Q93ZN9"/>
<dbReference type="ChEMBL" id="CHEMBL3308984"/>
<dbReference type="MetOSite" id="Q93ZN9"/>
<dbReference type="PaxDb" id="3702-AT4G33680.1"/>
<dbReference type="ProteomicsDB" id="224699"/>
<dbReference type="EnsemblPlants" id="AT4G33680.1">
    <property type="protein sequence ID" value="AT4G33680.1"/>
    <property type="gene ID" value="AT4G33680"/>
</dbReference>
<dbReference type="GeneID" id="829510"/>
<dbReference type="Gramene" id="AT4G33680.1">
    <property type="protein sequence ID" value="AT4G33680.1"/>
    <property type="gene ID" value="AT4G33680"/>
</dbReference>
<dbReference type="KEGG" id="ath:AT4G33680"/>
<dbReference type="Araport" id="AT4G33680"/>
<dbReference type="TAIR" id="AT4G33680">
    <property type="gene designation" value="AGD2"/>
</dbReference>
<dbReference type="eggNOG" id="KOG0257">
    <property type="taxonomic scope" value="Eukaryota"/>
</dbReference>
<dbReference type="HOGENOM" id="CLU_051433_0_0_1"/>
<dbReference type="InParanoid" id="Q93ZN9"/>
<dbReference type="OMA" id="SKTFNMT"/>
<dbReference type="OrthoDB" id="7042322at2759"/>
<dbReference type="PhylomeDB" id="Q93ZN9"/>
<dbReference type="BioCyc" id="ARA:AT4G33680-MONOMER"/>
<dbReference type="BioCyc" id="MetaCyc:AT4G33680-MONOMER"/>
<dbReference type="BRENDA" id="2.6.1.83">
    <property type="organism ID" value="399"/>
</dbReference>
<dbReference type="SABIO-RK" id="Q93ZN9"/>
<dbReference type="UniPathway" id="UPA00034">
    <property type="reaction ID" value="UER00466"/>
</dbReference>
<dbReference type="CD-CODE" id="4299E36E">
    <property type="entry name" value="Nucleolus"/>
</dbReference>
<dbReference type="EvolutionaryTrace" id="Q93ZN9"/>
<dbReference type="PRO" id="PR:Q93ZN9"/>
<dbReference type="Proteomes" id="UP000006548">
    <property type="component" value="Chromosome 4"/>
</dbReference>
<dbReference type="ExpressionAtlas" id="Q93ZN9">
    <property type="expression patterns" value="baseline and differential"/>
</dbReference>
<dbReference type="GO" id="GO:0009507">
    <property type="term" value="C:chloroplast"/>
    <property type="evidence" value="ECO:0000314"/>
    <property type="project" value="TAIR"/>
</dbReference>
<dbReference type="GO" id="GO:0009570">
    <property type="term" value="C:chloroplast stroma"/>
    <property type="evidence" value="ECO:0000314"/>
    <property type="project" value="TAIR"/>
</dbReference>
<dbReference type="GO" id="GO:0005886">
    <property type="term" value="C:plasma membrane"/>
    <property type="evidence" value="ECO:0007005"/>
    <property type="project" value="TAIR"/>
</dbReference>
<dbReference type="GO" id="GO:0005507">
    <property type="term" value="F:copper ion binding"/>
    <property type="evidence" value="ECO:0007005"/>
    <property type="project" value="TAIR"/>
</dbReference>
<dbReference type="GO" id="GO:0010285">
    <property type="term" value="F:L,L-diaminopimelate aminotransferase activity"/>
    <property type="evidence" value="ECO:0000314"/>
    <property type="project" value="TAIR"/>
</dbReference>
<dbReference type="GO" id="GO:0030170">
    <property type="term" value="F:pyridoxal phosphate binding"/>
    <property type="evidence" value="ECO:0007669"/>
    <property type="project" value="InterPro"/>
</dbReference>
<dbReference type="GO" id="GO:0008483">
    <property type="term" value="F:transaminase activity"/>
    <property type="evidence" value="ECO:0000314"/>
    <property type="project" value="TAIR"/>
</dbReference>
<dbReference type="GO" id="GO:0009089">
    <property type="term" value="P:lysine biosynthetic process via diaminopimelate"/>
    <property type="evidence" value="ECO:0007669"/>
    <property type="project" value="UniProtKB-UniPathway"/>
</dbReference>
<dbReference type="GO" id="GO:0009862">
    <property type="term" value="P:systemic acquired resistance, salicylic acid mediated signaling pathway"/>
    <property type="evidence" value="ECO:0000315"/>
    <property type="project" value="TAIR"/>
</dbReference>
<dbReference type="CDD" id="cd00609">
    <property type="entry name" value="AAT_like"/>
    <property type="match status" value="1"/>
</dbReference>
<dbReference type="FunFam" id="3.40.640.10:FF:000099">
    <property type="entry name" value="LL-diaminopimelate aminotransferase, chloroplastic"/>
    <property type="match status" value="1"/>
</dbReference>
<dbReference type="FunFam" id="3.90.1150.10:FF:000085">
    <property type="entry name" value="LL-diaminopimelate aminotransferase, chloroplastic"/>
    <property type="match status" value="1"/>
</dbReference>
<dbReference type="Gene3D" id="3.90.1150.10">
    <property type="entry name" value="Aspartate Aminotransferase, domain 1"/>
    <property type="match status" value="1"/>
</dbReference>
<dbReference type="Gene3D" id="3.40.640.10">
    <property type="entry name" value="Type I PLP-dependent aspartate aminotransferase-like (Major domain)"/>
    <property type="match status" value="1"/>
</dbReference>
<dbReference type="HAMAP" id="MF_01642">
    <property type="entry name" value="DapL_aminotrans_1"/>
    <property type="match status" value="1"/>
</dbReference>
<dbReference type="InterPro" id="IPR004839">
    <property type="entry name" value="Aminotransferase_I/II_large"/>
</dbReference>
<dbReference type="InterPro" id="IPR019942">
    <property type="entry name" value="DapL/ALD1"/>
</dbReference>
<dbReference type="InterPro" id="IPR015424">
    <property type="entry name" value="PyrdxlP-dep_Trfase"/>
</dbReference>
<dbReference type="InterPro" id="IPR015421">
    <property type="entry name" value="PyrdxlP-dep_Trfase_major"/>
</dbReference>
<dbReference type="InterPro" id="IPR015422">
    <property type="entry name" value="PyrdxlP-dep_Trfase_small"/>
</dbReference>
<dbReference type="NCBIfam" id="TIGR03542">
    <property type="entry name" value="DAPAT_plant"/>
    <property type="match status" value="1"/>
</dbReference>
<dbReference type="PANTHER" id="PTHR43144">
    <property type="entry name" value="AMINOTRANSFERASE"/>
    <property type="match status" value="1"/>
</dbReference>
<dbReference type="Pfam" id="PF00155">
    <property type="entry name" value="Aminotran_1_2"/>
    <property type="match status" value="1"/>
</dbReference>
<dbReference type="SUPFAM" id="SSF53383">
    <property type="entry name" value="PLP-dependent transferases"/>
    <property type="match status" value="1"/>
</dbReference>
<comment type="function">
    <text evidence="2 3 4 5">Required for lysine biosynthesis. Catalyzes the direct conversion of tetrahydrodipicolinate to LL-diaminopimelate, a reaction that requires three enzymes in E.coli. Not active with meso-diaminopimelate, lysine or ornithine as substrates.</text>
</comment>
<comment type="catalytic activity">
    <reaction evidence="2 3">
        <text>(2S,6S)-2,6-diaminopimelate + 2-oxoglutarate = (S)-2,3,4,5-tetrahydrodipicolinate + L-glutamate + H2O + H(+)</text>
        <dbReference type="Rhea" id="RHEA:23988"/>
        <dbReference type="ChEBI" id="CHEBI:15377"/>
        <dbReference type="ChEBI" id="CHEBI:15378"/>
        <dbReference type="ChEBI" id="CHEBI:16810"/>
        <dbReference type="ChEBI" id="CHEBI:16845"/>
        <dbReference type="ChEBI" id="CHEBI:29985"/>
        <dbReference type="ChEBI" id="CHEBI:57609"/>
        <dbReference type="EC" id="2.6.1.83"/>
    </reaction>
</comment>
<comment type="cofactor">
    <cofactor evidence="3 4">
        <name>pyridoxal 5'-phosphate</name>
        <dbReference type="ChEBI" id="CHEBI:597326"/>
    </cofactor>
</comment>
<comment type="biophysicochemical properties">
    <kinetics>
        <KM evidence="3">47 uM for LL-2,6-diaminopimelate</KM>
        <KM evidence="2">67 uM for LL-2,6-diaminopimelate</KM>
        <KM evidence="2">8.7 mM for 2-oxoglutarate</KM>
        <KM evidence="2">38 uM for L-2,3,4,5-tetrahydrodipicolinate</KM>
        <KM evidence="2">1.9 mM for glutamatic acid</KM>
        <Vmax evidence="2">22.3 umol/min/mg enzyme for the forward reaction</Vmax>
        <Vmax evidence="2">0.38 umol/min/mg enzyme for the reverse reaction</Vmax>
    </kinetics>
    <phDependence>
        <text evidence="2">Optimum pH is 7.9 in Tris buffer and 7.6 in HEPES buffer.</text>
    </phDependence>
    <temperatureDependence>
        <text evidence="2">Optimum temperature is 36 degrees Celsius.</text>
    </temperatureDependence>
</comment>
<comment type="pathway">
    <text>Amino-acid biosynthesis; L-lysine biosynthesis via DAP pathway; LL-2,6-diaminopimelate from (S)-tetrahydrodipicolinate (aminotransferase route): step 1/1.</text>
</comment>
<comment type="subunit">
    <text evidence="3 4">Homodimer.</text>
</comment>
<comment type="subcellular location">
    <subcellularLocation>
        <location evidence="1">Plastid</location>
        <location evidence="1">Chloroplast</location>
    </subcellularLocation>
</comment>
<comment type="tissue specificity">
    <text evidence="1">Highly expressed in seedlings, roots, stems, flowers and leaves. Lower expression in siliques.</text>
</comment>
<comment type="developmental stage">
    <text evidence="1">Down-regulated during senescence.</text>
</comment>
<comment type="induction">
    <text evidence="1">Not induced by pathogen infection, but down-regulated by dark treatment.</text>
</comment>
<comment type="disruption phenotype">
    <text evidence="1">Embryonic lethality.</text>
</comment>
<comment type="miscellaneous">
    <text>The expected covalent binding of pyridoxal phosphate by Lys-305 has not been observed in the 3D-structure.</text>
</comment>
<comment type="similarity">
    <text evidence="6">Belongs to the class-I pyridoxal-phosphate-dependent aminotransferase family. LL-diaminopimelate aminotransferase subfamily.</text>
</comment>
<comment type="sequence caution" evidence="6">
    <conflict type="erroneous gene model prediction">
        <sequence resource="EMBL-CDS" id="CAA20581"/>
    </conflict>
</comment>
<comment type="sequence caution" evidence="6">
    <conflict type="erroneous gene model prediction">
        <sequence resource="EMBL-CDS" id="CAB80085"/>
    </conflict>
</comment>
<name>DAPAT_ARATH</name>
<proteinExistence type="evidence at protein level"/>
<gene>
    <name type="primary">DAP</name>
    <name type="synonym">AGD2</name>
    <name type="ordered locus">At4g33680</name>
    <name type="ORF">T16L1.170</name>
</gene>
<feature type="transit peptide" description="Chloroplast" evidence="6">
    <location>
        <begin position="1"/>
        <end position="45"/>
    </location>
</feature>
<feature type="chain" id="PRO_0000306914" description="LL-diaminopimelate aminotransferase, chloroplastic">
    <location>
        <begin position="46"/>
        <end position="461"/>
    </location>
</feature>
<feature type="binding site" evidence="4">
    <location>
        <position position="72"/>
    </location>
    <ligand>
        <name>substrate</name>
    </ligand>
</feature>
<feature type="binding site" evidence="3 4">
    <location>
        <position position="99"/>
    </location>
    <ligand>
        <name>substrate</name>
    </ligand>
</feature>
<feature type="binding site" evidence="3 4">
    <location>
        <position position="129"/>
    </location>
    <ligand>
        <name>pyridoxal 5'-phosphate</name>
        <dbReference type="ChEBI" id="CHEBI:597326"/>
    </ligand>
</feature>
<feature type="binding site" evidence="3 4">
    <location>
        <begin position="163"/>
        <end position="164"/>
    </location>
    <ligand>
        <name>pyridoxal 5'-phosphate</name>
        <dbReference type="ChEBI" id="CHEBI:597326"/>
    </ligand>
</feature>
<feature type="binding site" evidence="3 4">
    <location>
        <position position="164"/>
    </location>
    <ligand>
        <name>substrate</name>
    </ligand>
</feature>
<feature type="binding site" evidence="3">
    <location>
        <position position="187"/>
    </location>
    <ligand>
        <name>pyridoxal 5'-phosphate</name>
        <dbReference type="ChEBI" id="CHEBI:597326"/>
    </ligand>
</feature>
<feature type="binding site" evidence="3 4">
    <location>
        <position position="187"/>
    </location>
    <ligand>
        <name>substrate</name>
    </ligand>
</feature>
<feature type="binding site" evidence="3 4">
    <location>
        <position position="244"/>
    </location>
    <ligand>
        <name>pyridoxal 5'-phosphate</name>
        <dbReference type="ChEBI" id="CHEBI:597326"/>
    </ligand>
</feature>
<feature type="binding site" evidence="3 4">
    <location>
        <position position="244"/>
    </location>
    <ligand>
        <name>substrate</name>
    </ligand>
</feature>
<feature type="binding site" evidence="3 4">
    <location>
        <position position="275"/>
    </location>
    <ligand>
        <name>pyridoxal 5'-phosphate</name>
        <dbReference type="ChEBI" id="CHEBI:597326"/>
    </ligand>
</feature>
<feature type="binding site" evidence="3 4">
    <location>
        <begin position="302"/>
        <end position="304"/>
    </location>
    <ligand>
        <name>pyridoxal 5'-phosphate</name>
        <dbReference type="ChEBI" id="CHEBI:597326"/>
    </ligand>
</feature>
<feature type="binding site" evidence="3 4">
    <location>
        <position position="313"/>
    </location>
    <ligand>
        <name>pyridoxal 5'-phosphate</name>
        <dbReference type="ChEBI" id="CHEBI:597326"/>
    </ligand>
</feature>
<feature type="binding site" evidence="3 4">
    <location>
        <position position="344"/>
    </location>
    <ligand>
        <name>pyridoxal 5'-phosphate</name>
        <dbReference type="ChEBI" id="CHEBI:597326"/>
    </ligand>
</feature>
<feature type="binding site" evidence="3 4">
    <location>
        <position position="344"/>
    </location>
    <ligand>
        <name>substrate</name>
    </ligand>
</feature>
<feature type="binding site" evidence="3 4">
    <location>
        <position position="439"/>
    </location>
    <ligand>
        <name>substrate</name>
    </ligand>
</feature>
<feature type="modified residue" description="N6-(pyridoxal phosphate)lysine" evidence="4 7">
    <location>
        <position position="305"/>
    </location>
</feature>
<feature type="mutagenesis site" description="Loss of LL-DAP-aminotransferase activity." evidence="4">
    <original>K</original>
    <variation>N</variation>
    <location>
        <position position="305"/>
    </location>
</feature>
<feature type="mutagenesis site" description="Loss of LL-DAP-aminotransferase activity." evidence="4">
    <original>K</original>
    <variation>Q</variation>
    <location>
        <position position="305"/>
    </location>
</feature>
<feature type="mutagenesis site" description="In agd2-1; reduced activity and increased resistance to pathogen." evidence="1">
    <original>P</original>
    <variation>S</variation>
    <location>
        <position position="398"/>
    </location>
</feature>
<feature type="helix" evidence="8">
    <location>
        <begin position="63"/>
        <end position="67"/>
    </location>
</feature>
<feature type="helix" evidence="8">
    <location>
        <begin position="73"/>
        <end position="87"/>
    </location>
</feature>
<feature type="helix" evidence="8">
    <location>
        <begin position="107"/>
        <end position="119"/>
    </location>
</feature>
<feature type="turn" evidence="8">
    <location>
        <begin position="123"/>
        <end position="125"/>
    </location>
</feature>
<feature type="helix" evidence="8">
    <location>
        <begin position="136"/>
        <end position="147"/>
    </location>
</feature>
<feature type="turn" evidence="8">
    <location>
        <begin position="148"/>
        <end position="151"/>
    </location>
</feature>
<feature type="helix" evidence="8">
    <location>
        <begin position="154"/>
        <end position="156"/>
    </location>
</feature>
<feature type="strand" evidence="8">
    <location>
        <begin position="157"/>
        <end position="161"/>
    </location>
</feature>
<feature type="helix" evidence="8">
    <location>
        <begin position="163"/>
        <end position="174"/>
    </location>
</feature>
<feature type="strand" evidence="8">
    <location>
        <begin position="180"/>
        <end position="185"/>
    </location>
</feature>
<feature type="helix" evidence="8">
    <location>
        <begin position="189"/>
        <end position="197"/>
    </location>
</feature>
<feature type="turn" evidence="8">
    <location>
        <begin position="205"/>
        <end position="208"/>
    </location>
</feature>
<feature type="strand" evidence="8">
    <location>
        <begin position="214"/>
        <end position="217"/>
    </location>
</feature>
<feature type="helix" evidence="8">
    <location>
        <begin position="220"/>
        <end position="222"/>
    </location>
</feature>
<feature type="helix" evidence="8">
    <location>
        <begin position="228"/>
        <end position="230"/>
    </location>
</feature>
<feature type="strand" evidence="8">
    <location>
        <begin position="235"/>
        <end position="242"/>
    </location>
</feature>
<feature type="turn" evidence="8">
    <location>
        <begin position="244"/>
        <end position="246"/>
    </location>
</feature>
<feature type="helix" evidence="8">
    <location>
        <begin position="252"/>
        <end position="265"/>
    </location>
</feature>
<feature type="strand" evidence="8">
    <location>
        <begin position="268"/>
        <end position="272"/>
    </location>
</feature>
<feature type="helix" evidence="8">
    <location>
        <begin position="276"/>
        <end position="278"/>
    </location>
</feature>
<feature type="helix" evidence="8">
    <location>
        <begin position="287"/>
        <end position="289"/>
    </location>
</feature>
<feature type="helix" evidence="8">
    <location>
        <begin position="293"/>
        <end position="295"/>
    </location>
</feature>
<feature type="strand" evidence="8">
    <location>
        <begin position="297"/>
        <end position="303"/>
    </location>
</feature>
<feature type="helix" evidence="8">
    <location>
        <begin position="304"/>
        <end position="307"/>
    </location>
</feature>
<feature type="turn" evidence="8">
    <location>
        <begin position="309"/>
        <end position="312"/>
    </location>
</feature>
<feature type="strand" evidence="8">
    <location>
        <begin position="315"/>
        <end position="318"/>
    </location>
</feature>
<feature type="helix" evidence="8">
    <location>
        <begin position="331"/>
        <end position="341"/>
    </location>
</feature>
<feature type="helix" evidence="8">
    <location>
        <begin position="348"/>
        <end position="357"/>
    </location>
</feature>
<feature type="helix" evidence="8">
    <location>
        <begin position="360"/>
        <end position="386"/>
    </location>
</feature>
<feature type="strand" evidence="8">
    <location>
        <begin position="391"/>
        <end position="393"/>
    </location>
</feature>
<feature type="strand" evidence="8">
    <location>
        <begin position="395"/>
        <end position="403"/>
    </location>
</feature>
<feature type="helix" evidence="8">
    <location>
        <begin position="409"/>
        <end position="420"/>
    </location>
</feature>
<feature type="helix" evidence="8">
    <location>
        <begin position="427"/>
        <end position="430"/>
    </location>
</feature>
<feature type="helix" evidence="8">
    <location>
        <begin position="432"/>
        <end position="434"/>
    </location>
</feature>
<feature type="strand" evidence="8">
    <location>
        <begin position="437"/>
        <end position="441"/>
    </location>
</feature>
<feature type="helix" evidence="8">
    <location>
        <begin position="446"/>
        <end position="460"/>
    </location>
</feature>
<sequence>MSSTHQLVSSMISSSSSTFLAPSNFNLRTRNACLPMAKRVNTCKCVATPQEKIEYKTKVSRNSNMSKLQAGYLFPEIARRRSAHLLKYPDAQVISLGIGDTTEPIPEVITSAMAKKAHELSTIEGYSGYGAEQGAKPLRAAIAKTFYGGLGIGDDDVFVSDGAKCDISRLQVMFGSNVTIAVQDPSYPAYVDSSVIMGQTGQFNTDVQKYGNIEYMRCTPENGFFPDLSTVGRTDIIFFCSPNNPTGAAATREQLTQLVEFAKKNGSIIVYDSAYAMYMSDDNPRSIFEIPGAEEVAMETASFSKYAGFTGVRLGWTVIPKKLLYSDGFPVAKDFNRIICTCFNGASNISQAGALACLTPEGLEAMHKVIGFYKENTNIIIDTFTSLGYDVYGGKNAPYVWVHFPNQSSWDVFAEILEKTHVVTTPGSGFGPGGEGFVRVSAFGHRENILEACRRFKQLYK</sequence>
<reference key="1">
    <citation type="journal article" date="2004" name="Plant Cell">
        <title>Divergent roles in Arabidopsis thaliana development and defense of two homologous genes, aberrant growth and death2 and AGD2-LIKE DEFENSE RESPONSE PROTEIN1, encoding novel aminotransferases.</title>
        <authorList>
            <person name="Song J.T."/>
            <person name="Lu H."/>
            <person name="Greenberg J.T."/>
        </authorList>
    </citation>
    <scope>NUCLEOTIDE SEQUENCE [MRNA]</scope>
    <scope>MUTAGENESIS OF PRO-398</scope>
    <scope>SUBCELLULAR LOCATION</scope>
    <scope>INDUCTION</scope>
    <scope>DEVELOPMENTAL STAGE</scope>
    <scope>TISSUE SPECIFICITY</scope>
    <scope>DISRUPTION PHENOTYPE</scope>
</reference>
<reference key="2">
    <citation type="journal article" date="1999" name="Nature">
        <title>Sequence and analysis of chromosome 4 of the plant Arabidopsis thaliana.</title>
        <authorList>
            <person name="Mayer K.F.X."/>
            <person name="Schueller C."/>
            <person name="Wambutt R."/>
            <person name="Murphy G."/>
            <person name="Volckaert G."/>
            <person name="Pohl T."/>
            <person name="Duesterhoeft A."/>
            <person name="Stiekema W."/>
            <person name="Entian K.-D."/>
            <person name="Terryn N."/>
            <person name="Harris B."/>
            <person name="Ansorge W."/>
            <person name="Brandt P."/>
            <person name="Grivell L.A."/>
            <person name="Rieger M."/>
            <person name="Weichselgartner M."/>
            <person name="de Simone V."/>
            <person name="Obermaier B."/>
            <person name="Mache R."/>
            <person name="Mueller M."/>
            <person name="Kreis M."/>
            <person name="Delseny M."/>
            <person name="Puigdomenech P."/>
            <person name="Watson M."/>
            <person name="Schmidtheini T."/>
            <person name="Reichert B."/>
            <person name="Portetelle D."/>
            <person name="Perez-Alonso M."/>
            <person name="Boutry M."/>
            <person name="Bancroft I."/>
            <person name="Vos P."/>
            <person name="Hoheisel J."/>
            <person name="Zimmermann W."/>
            <person name="Wedler H."/>
            <person name="Ridley P."/>
            <person name="Langham S.-A."/>
            <person name="McCullagh B."/>
            <person name="Bilham L."/>
            <person name="Robben J."/>
            <person name="van der Schueren J."/>
            <person name="Grymonprez B."/>
            <person name="Chuang Y.-J."/>
            <person name="Vandenbussche F."/>
            <person name="Braeken M."/>
            <person name="Weltjens I."/>
            <person name="Voet M."/>
            <person name="Bastiaens I."/>
            <person name="Aert R."/>
            <person name="Defoor E."/>
            <person name="Weitzenegger T."/>
            <person name="Bothe G."/>
            <person name="Ramsperger U."/>
            <person name="Hilbert H."/>
            <person name="Braun M."/>
            <person name="Holzer E."/>
            <person name="Brandt A."/>
            <person name="Peters S."/>
            <person name="van Staveren M."/>
            <person name="Dirkse W."/>
            <person name="Mooijman P."/>
            <person name="Klein Lankhorst R."/>
            <person name="Rose M."/>
            <person name="Hauf J."/>
            <person name="Koetter P."/>
            <person name="Berneiser S."/>
            <person name="Hempel S."/>
            <person name="Feldpausch M."/>
            <person name="Lamberth S."/>
            <person name="Van den Daele H."/>
            <person name="De Keyser A."/>
            <person name="Buysshaert C."/>
            <person name="Gielen J."/>
            <person name="Villarroel R."/>
            <person name="De Clercq R."/>
            <person name="van Montagu M."/>
            <person name="Rogers J."/>
            <person name="Cronin A."/>
            <person name="Quail M.A."/>
            <person name="Bray-Allen S."/>
            <person name="Clark L."/>
            <person name="Doggett J."/>
            <person name="Hall S."/>
            <person name="Kay M."/>
            <person name="Lennard N."/>
            <person name="McLay K."/>
            <person name="Mayes R."/>
            <person name="Pettett A."/>
            <person name="Rajandream M.A."/>
            <person name="Lyne M."/>
            <person name="Benes V."/>
            <person name="Rechmann S."/>
            <person name="Borkova D."/>
            <person name="Bloecker H."/>
            <person name="Scharfe M."/>
            <person name="Grimm M."/>
            <person name="Loehnert T.-H."/>
            <person name="Dose S."/>
            <person name="de Haan M."/>
            <person name="Maarse A.C."/>
            <person name="Schaefer M."/>
            <person name="Mueller-Auer S."/>
            <person name="Gabel C."/>
            <person name="Fuchs M."/>
            <person name="Fartmann B."/>
            <person name="Granderath K."/>
            <person name="Dauner D."/>
            <person name="Herzl A."/>
            <person name="Neumann S."/>
            <person name="Argiriou A."/>
            <person name="Vitale D."/>
            <person name="Liguori R."/>
            <person name="Piravandi E."/>
            <person name="Massenet O."/>
            <person name="Quigley F."/>
            <person name="Clabauld G."/>
            <person name="Muendlein A."/>
            <person name="Felber R."/>
            <person name="Schnabl S."/>
            <person name="Hiller R."/>
            <person name="Schmidt W."/>
            <person name="Lecharny A."/>
            <person name="Aubourg S."/>
            <person name="Chefdor F."/>
            <person name="Cooke R."/>
            <person name="Berger C."/>
            <person name="Monfort A."/>
            <person name="Casacuberta E."/>
            <person name="Gibbons T."/>
            <person name="Weber N."/>
            <person name="Vandenbol M."/>
            <person name="Bargues M."/>
            <person name="Terol J."/>
            <person name="Torres A."/>
            <person name="Perez-Perez A."/>
            <person name="Purnelle B."/>
            <person name="Bent E."/>
            <person name="Johnson S."/>
            <person name="Tacon D."/>
            <person name="Jesse T."/>
            <person name="Heijnen L."/>
            <person name="Schwarz S."/>
            <person name="Scholler P."/>
            <person name="Heber S."/>
            <person name="Francs P."/>
            <person name="Bielke C."/>
            <person name="Frishman D."/>
            <person name="Haase D."/>
            <person name="Lemcke K."/>
            <person name="Mewes H.-W."/>
            <person name="Stocker S."/>
            <person name="Zaccaria P."/>
            <person name="Bevan M."/>
            <person name="Wilson R.K."/>
            <person name="de la Bastide M."/>
            <person name="Habermann K."/>
            <person name="Parnell L."/>
            <person name="Dedhia N."/>
            <person name="Gnoj L."/>
            <person name="Schutz K."/>
            <person name="Huang E."/>
            <person name="Spiegel L."/>
            <person name="Sekhon M."/>
            <person name="Murray J."/>
            <person name="Sheet P."/>
            <person name="Cordes M."/>
            <person name="Abu-Threideh J."/>
            <person name="Stoneking T."/>
            <person name="Kalicki J."/>
            <person name="Graves T."/>
            <person name="Harmon G."/>
            <person name="Edwards J."/>
            <person name="Latreille P."/>
            <person name="Courtney L."/>
            <person name="Cloud J."/>
            <person name="Abbott A."/>
            <person name="Scott K."/>
            <person name="Johnson D."/>
            <person name="Minx P."/>
            <person name="Bentley D."/>
            <person name="Fulton B."/>
            <person name="Miller N."/>
            <person name="Greco T."/>
            <person name="Kemp K."/>
            <person name="Kramer J."/>
            <person name="Fulton L."/>
            <person name="Mardis E."/>
            <person name="Dante M."/>
            <person name="Pepin K."/>
            <person name="Hillier L.W."/>
            <person name="Nelson J."/>
            <person name="Spieth J."/>
            <person name="Ryan E."/>
            <person name="Andrews S."/>
            <person name="Geisel C."/>
            <person name="Layman D."/>
            <person name="Du H."/>
            <person name="Ali J."/>
            <person name="Berghoff A."/>
            <person name="Jones K."/>
            <person name="Drone K."/>
            <person name="Cotton M."/>
            <person name="Joshu C."/>
            <person name="Antonoiu B."/>
            <person name="Zidanic M."/>
            <person name="Strong C."/>
            <person name="Sun H."/>
            <person name="Lamar B."/>
            <person name="Yordan C."/>
            <person name="Ma P."/>
            <person name="Zhong J."/>
            <person name="Preston R."/>
            <person name="Vil D."/>
            <person name="Shekher M."/>
            <person name="Matero A."/>
            <person name="Shah R."/>
            <person name="Swaby I.K."/>
            <person name="O'Shaughnessy A."/>
            <person name="Rodriguez M."/>
            <person name="Hoffman J."/>
            <person name="Till S."/>
            <person name="Granat S."/>
            <person name="Shohdy N."/>
            <person name="Hasegawa A."/>
            <person name="Hameed A."/>
            <person name="Lodhi M."/>
            <person name="Johnson A."/>
            <person name="Chen E."/>
            <person name="Marra M.A."/>
            <person name="Martienssen R."/>
            <person name="McCombie W.R."/>
        </authorList>
    </citation>
    <scope>NUCLEOTIDE SEQUENCE [LARGE SCALE GENOMIC DNA]</scope>
    <source>
        <strain>cv. Columbia</strain>
    </source>
</reference>
<reference key="3">
    <citation type="journal article" date="2017" name="Plant J.">
        <title>Araport11: a complete reannotation of the Arabidopsis thaliana reference genome.</title>
        <authorList>
            <person name="Cheng C.Y."/>
            <person name="Krishnakumar V."/>
            <person name="Chan A.P."/>
            <person name="Thibaud-Nissen F."/>
            <person name="Schobel S."/>
            <person name="Town C.D."/>
        </authorList>
    </citation>
    <scope>GENOME REANNOTATION</scope>
    <source>
        <strain>cv. Columbia</strain>
    </source>
</reference>
<reference key="4">
    <citation type="journal article" date="2003" name="Science">
        <title>Empirical analysis of transcriptional activity in the Arabidopsis genome.</title>
        <authorList>
            <person name="Yamada K."/>
            <person name="Lim J."/>
            <person name="Dale J.M."/>
            <person name="Chen H."/>
            <person name="Shinn P."/>
            <person name="Palm C.J."/>
            <person name="Southwick A.M."/>
            <person name="Wu H.C."/>
            <person name="Kim C.J."/>
            <person name="Nguyen M."/>
            <person name="Pham P.K."/>
            <person name="Cheuk R.F."/>
            <person name="Karlin-Newmann G."/>
            <person name="Liu S.X."/>
            <person name="Lam B."/>
            <person name="Sakano H."/>
            <person name="Wu T."/>
            <person name="Yu G."/>
            <person name="Miranda M."/>
            <person name="Quach H.L."/>
            <person name="Tripp M."/>
            <person name="Chang C.H."/>
            <person name="Lee J.M."/>
            <person name="Toriumi M.J."/>
            <person name="Chan M.M."/>
            <person name="Tang C.C."/>
            <person name="Onodera C.S."/>
            <person name="Deng J.M."/>
            <person name="Akiyama K."/>
            <person name="Ansari Y."/>
            <person name="Arakawa T."/>
            <person name="Banh J."/>
            <person name="Banno F."/>
            <person name="Bowser L."/>
            <person name="Brooks S.Y."/>
            <person name="Carninci P."/>
            <person name="Chao Q."/>
            <person name="Choy N."/>
            <person name="Enju A."/>
            <person name="Goldsmith A.D."/>
            <person name="Gurjal M."/>
            <person name="Hansen N.F."/>
            <person name="Hayashizaki Y."/>
            <person name="Johnson-Hopson C."/>
            <person name="Hsuan V.W."/>
            <person name="Iida K."/>
            <person name="Karnes M."/>
            <person name="Khan S."/>
            <person name="Koesema E."/>
            <person name="Ishida J."/>
            <person name="Jiang P.X."/>
            <person name="Jones T."/>
            <person name="Kawai J."/>
            <person name="Kamiya A."/>
            <person name="Meyers C."/>
            <person name="Nakajima M."/>
            <person name="Narusaka M."/>
            <person name="Seki M."/>
            <person name="Sakurai T."/>
            <person name="Satou M."/>
            <person name="Tamse R."/>
            <person name="Vaysberg M."/>
            <person name="Wallender E.K."/>
            <person name="Wong C."/>
            <person name="Yamamura Y."/>
            <person name="Yuan S."/>
            <person name="Shinozaki K."/>
            <person name="Davis R.W."/>
            <person name="Theologis A."/>
            <person name="Ecker J.R."/>
        </authorList>
    </citation>
    <scope>NUCLEOTIDE SEQUENCE [LARGE SCALE MRNA]</scope>
    <source>
        <strain>cv. Columbia</strain>
    </source>
</reference>
<reference key="5">
    <citation type="journal article" date="2006" name="Plant Physiol.">
        <title>An LL-diaminopimelate aminotransferase defines a novel variant of the lysine biosynthesis pathway in plants.</title>
        <authorList>
            <person name="Hudson A.O."/>
            <person name="Singh B.K."/>
            <person name="Leustek T."/>
            <person name="Gilvarg C."/>
        </authorList>
    </citation>
    <scope>IDENTIFICATION</scope>
    <scope>FUNCTION</scope>
    <scope>CATALYTIC ACTIVITY</scope>
    <scope>BIOPHYSICOCHEMICAL PROPERTIES</scope>
</reference>
<reference key="6">
    <citation type="journal article" date="2011" name="Biochim. Biophys. Acta">
        <title>Structural insights for the substrate recognition mechanism of LL-diaminopimelate aminotransferase.</title>
        <authorList>
            <person name="Watanabe N."/>
            <person name="James M.N."/>
        </authorList>
    </citation>
    <scope>FUNCTION</scope>
</reference>
<reference key="7">
    <citation type="journal article" date="2007" name="J. Mol. Biol.">
        <title>Crystal structure of LL-diaminopimelate aminotransferase from Arabidopsis thaliana: a recently discovered enzyme in the biosynthesis of L-Lysine by plants and Chlamydia.</title>
        <authorList>
            <person name="Watanabe N."/>
            <person name="Cherney M.M."/>
            <person name="van Belkum M.J."/>
            <person name="Marcus S.L."/>
            <person name="Flegel M.D."/>
            <person name="Clay M.D."/>
            <person name="Deyholos M.K."/>
            <person name="Vederas J.C."/>
            <person name="James M.N."/>
        </authorList>
    </citation>
    <scope>X-RAY CRYSTALLOGRAPHY (1.95 ANGSTROMS) OF 36-461 IN COMPLEX WITH SUBSTRATE ANALOG AND PYRIDOXAL PHOSPHATE</scope>
    <scope>FUNCTION</scope>
    <scope>CATALYTIC ACTIVITY</scope>
    <scope>BIOPHYSICOCHEMICAL PROPERTIES</scope>
    <scope>COFACTOR</scope>
    <scope>SUBUNIT</scope>
</reference>
<reference key="8">
    <citation type="journal article" date="2008" name="J. Mol. Biol.">
        <title>Mechanism of substrate recognition and PLP-induced conformational changes in LL-diaminopimelate aminotransferase from Arabidopsis thaliana.</title>
        <authorList>
            <person name="Watanabe N."/>
            <person name="Clay M.D."/>
            <person name="van Belkum M.J."/>
            <person name="Cherney M.M."/>
            <person name="Vederas J.C."/>
            <person name="James M.N."/>
        </authorList>
    </citation>
    <scope>X-RAY CRYSTALLOGRAPHY (1.55 ANGSTROMS) OF 36-461 OF MUTANTS AND WILD-TYPE IN COMPLEX WITH SUBSTRATE ANALOG AND PYRIDOXAL PHOSPHATE ANALOG</scope>
    <scope>FUNCTION</scope>
    <scope>MUTAGENESIS OF LYS-305</scope>
    <scope>COFACTOR</scope>
    <scope>SUBUNIT</scope>
</reference>
<evidence type="ECO:0000269" key="1">
    <source>
    </source>
</evidence>
<evidence type="ECO:0000269" key="2">
    <source>
    </source>
</evidence>
<evidence type="ECO:0000269" key="3">
    <source>
    </source>
</evidence>
<evidence type="ECO:0000269" key="4">
    <source>
    </source>
</evidence>
<evidence type="ECO:0000269" key="5">
    <source>
    </source>
</evidence>
<evidence type="ECO:0000305" key="6"/>
<evidence type="ECO:0000305" key="7">
    <source>
    </source>
</evidence>
<evidence type="ECO:0007829" key="8">
    <source>
        <dbReference type="PDB" id="3EI9"/>
    </source>
</evidence>